<keyword id="KW-0001">2Fe-2S</keyword>
<keyword id="KW-0002">3D-structure</keyword>
<keyword id="KW-0003">3Fe-4S</keyword>
<keyword id="KW-0004">4Fe-4S</keyword>
<keyword id="KW-0007">Acetylation</keyword>
<keyword id="KW-0249">Electron transport</keyword>
<keyword id="KW-0408">Iron</keyword>
<keyword id="KW-0411">Iron-sulfur</keyword>
<keyword id="KW-0472">Membrane</keyword>
<keyword id="KW-0479">Metal-binding</keyword>
<keyword id="KW-0496">Mitochondrion</keyword>
<keyword id="KW-0999">Mitochondrion inner membrane</keyword>
<keyword id="KW-0560">Oxidoreductase</keyword>
<keyword id="KW-1185">Reference proteome</keyword>
<keyword id="KW-0809">Transit peptide</keyword>
<keyword id="KW-0813">Transport</keyword>
<keyword id="KW-0816">Tricarboxylic acid cycle</keyword>
<name>SDHB_PIG</name>
<protein>
    <recommendedName>
        <fullName>Succinate dehydrogenase [ubiquinone] iron-sulfur subunit, mitochondrial</fullName>
        <ecNumber evidence="1">1.3.5.1</ecNumber>
    </recommendedName>
    <alternativeName>
        <fullName>Iron-sulfur subunit of complex II</fullName>
        <shortName>Ip</shortName>
    </alternativeName>
    <alternativeName>
        <fullName>Malate dehydrogenase [quinone] iron-sulfur subunit</fullName>
        <ecNumber evidence="2">1.1.5.-</ecNumber>
    </alternativeName>
</protein>
<proteinExistence type="evidence at protein level"/>
<evidence type="ECO:0000250" key="1">
    <source>
        <dbReference type="UniProtKB" id="P21912"/>
    </source>
</evidence>
<evidence type="ECO:0000250" key="2">
    <source>
        <dbReference type="UniProtKB" id="Q3T189"/>
    </source>
</evidence>
<evidence type="ECO:0000250" key="3">
    <source>
        <dbReference type="UniProtKB" id="Q9CQA3"/>
    </source>
</evidence>
<evidence type="ECO:0000250" key="4">
    <source>
        <dbReference type="UniProtKB" id="Q9YHT2"/>
    </source>
</evidence>
<evidence type="ECO:0000255" key="5">
    <source>
        <dbReference type="PROSITE-ProRule" id="PRU00465"/>
    </source>
</evidence>
<evidence type="ECO:0000255" key="6">
    <source>
        <dbReference type="PROSITE-ProRule" id="PRU00711"/>
    </source>
</evidence>
<evidence type="ECO:0000269" key="7">
    <source>
    </source>
</evidence>
<evidence type="ECO:0000305" key="8"/>
<evidence type="ECO:0007744" key="9">
    <source>
        <dbReference type="PDB" id="1ZOY"/>
    </source>
</evidence>
<evidence type="ECO:0007829" key="10">
    <source>
        <dbReference type="PDB" id="1ZOY"/>
    </source>
</evidence>
<evidence type="ECO:0007829" key="11">
    <source>
        <dbReference type="PDB" id="3AEF"/>
    </source>
</evidence>
<evidence type="ECO:0007829" key="12">
    <source>
        <dbReference type="PDB" id="3SFD"/>
    </source>
</evidence>
<reference key="1">
    <citation type="submission" date="2006-08" db="EMBL/GenBank/DDBJ databases">
        <authorList>
            <person name="Liu G.Y."/>
        </authorList>
    </citation>
    <scope>NUCLEOTIDE SEQUENCE [LARGE SCALE MRNA]</scope>
</reference>
<reference key="2">
    <citation type="journal article" date="2006" name="Mol. Biol. Evol.">
        <title>Housekeeping genes for phylogenetic analysis of eutherian relationships.</title>
        <authorList>
            <person name="Kullberg M."/>
            <person name="Nilsson M.A."/>
            <person name="Arnason U."/>
            <person name="Harley E.H."/>
            <person name="Janke A."/>
        </authorList>
    </citation>
    <scope>NUCLEOTIDE SEQUENCE [MRNA] OF 13-264</scope>
    <source>
        <tissue>Liver</tissue>
    </source>
</reference>
<reference key="3">
    <citation type="journal article" date="2005" name="Cell">
        <title>Crystal structure of mitochondrial respiratory membrane protein complex II.</title>
        <authorList>
            <person name="Sun F."/>
            <person name="Huo X."/>
            <person name="Zhai Y."/>
            <person name="Wang A."/>
            <person name="Xu J."/>
            <person name="Su D."/>
            <person name="Bartlam M."/>
            <person name="Rao Z."/>
        </authorList>
    </citation>
    <scope>X-RAY CRYSTALLOGRAPHY (2.4 ANGSTROMS) OF 29-279 IN COMPLEX WITH IRON-SULFUR CLUSTERS AND UBIQUINONE</scope>
    <scope>FUNCTION</scope>
    <scope>PATHWAY</scope>
    <scope>SUBUNIT</scope>
    <scope>COFACTOR</scope>
    <scope>IRON-SULFUR-BINDING</scope>
</reference>
<sequence length="280" mass="31586">MAAVVAVSLKRWFPATTLGGACLQACRGAQTAAATAPRIKKFAIYRWDPDKTGDKPHMQTYEIDLNNCGPMVLDALIKIKNEIDSTLTFRRSCREGICGSCAMNINGGNTLACTRRIDTNLDKVSKIYPLPHMYVIKDLVPDLSNFYAQYKSIEPYLKKKDESQEGKQQYLQSIEEREKLDGLYECILCACCSTSCPSYWWNGDKYLGPAVLMQAYRWMIDSRDDFTEERLAKLQDPFSLYRCHTIMNCTGTCPKGLNPGKAIAEIKKMMATYKEKKASA</sequence>
<dbReference type="EC" id="1.3.5.1" evidence="1"/>
<dbReference type="EC" id="1.1.5.-" evidence="2"/>
<dbReference type="EMBL" id="DQ915498">
    <property type="protein sequence ID" value="ABJ09403.1"/>
    <property type="molecule type" value="mRNA"/>
</dbReference>
<dbReference type="EMBL" id="DQ403018">
    <property type="protein sequence ID" value="ABD77151.1"/>
    <property type="molecule type" value="mRNA"/>
</dbReference>
<dbReference type="RefSeq" id="NP_001098423.1">
    <property type="nucleotide sequence ID" value="NM_001104953.1"/>
</dbReference>
<dbReference type="PDB" id="1ZOY">
    <property type="method" value="X-ray"/>
    <property type="resolution" value="2.40 A"/>
    <property type="chains" value="B=29-279"/>
</dbReference>
<dbReference type="PDB" id="1ZP0">
    <property type="method" value="X-ray"/>
    <property type="resolution" value="3.50 A"/>
    <property type="chains" value="B=29-279"/>
</dbReference>
<dbReference type="PDB" id="3ABV">
    <property type="method" value="X-ray"/>
    <property type="resolution" value="3.24 A"/>
    <property type="chains" value="B=29-280"/>
</dbReference>
<dbReference type="PDB" id="3AE1">
    <property type="method" value="X-ray"/>
    <property type="resolution" value="3.14 A"/>
    <property type="chains" value="B=29-280"/>
</dbReference>
<dbReference type="PDB" id="3AE2">
    <property type="method" value="X-ray"/>
    <property type="resolution" value="3.10 A"/>
    <property type="chains" value="B=29-280"/>
</dbReference>
<dbReference type="PDB" id="3AE3">
    <property type="method" value="X-ray"/>
    <property type="resolution" value="3.35 A"/>
    <property type="chains" value="B=29-280"/>
</dbReference>
<dbReference type="PDB" id="3AE4">
    <property type="method" value="X-ray"/>
    <property type="resolution" value="2.91 A"/>
    <property type="chains" value="B=29-280"/>
</dbReference>
<dbReference type="PDB" id="3AE5">
    <property type="method" value="X-ray"/>
    <property type="resolution" value="3.41 A"/>
    <property type="chains" value="B=29-280"/>
</dbReference>
<dbReference type="PDB" id="3AE6">
    <property type="method" value="X-ray"/>
    <property type="resolution" value="3.40 A"/>
    <property type="chains" value="B=29-280"/>
</dbReference>
<dbReference type="PDB" id="3AE7">
    <property type="method" value="X-ray"/>
    <property type="resolution" value="3.62 A"/>
    <property type="chains" value="B=29-280"/>
</dbReference>
<dbReference type="PDB" id="3AE8">
    <property type="method" value="X-ray"/>
    <property type="resolution" value="3.40 A"/>
    <property type="chains" value="B=29-280"/>
</dbReference>
<dbReference type="PDB" id="3AE9">
    <property type="method" value="X-ray"/>
    <property type="resolution" value="3.31 A"/>
    <property type="chains" value="B=29-280"/>
</dbReference>
<dbReference type="PDB" id="3AEA">
    <property type="method" value="X-ray"/>
    <property type="resolution" value="3.39 A"/>
    <property type="chains" value="B=29-280"/>
</dbReference>
<dbReference type="PDB" id="3AEB">
    <property type="method" value="X-ray"/>
    <property type="resolution" value="3.00 A"/>
    <property type="chains" value="B=29-280"/>
</dbReference>
<dbReference type="PDB" id="3AEC">
    <property type="method" value="X-ray"/>
    <property type="resolution" value="3.61 A"/>
    <property type="chains" value="B=29-280"/>
</dbReference>
<dbReference type="PDB" id="3AED">
    <property type="method" value="X-ray"/>
    <property type="resolution" value="3.52 A"/>
    <property type="chains" value="B=29-280"/>
</dbReference>
<dbReference type="PDB" id="3AEE">
    <property type="method" value="X-ray"/>
    <property type="resolution" value="3.22 A"/>
    <property type="chains" value="B=29-280"/>
</dbReference>
<dbReference type="PDB" id="3AEF">
    <property type="method" value="X-ray"/>
    <property type="resolution" value="2.80 A"/>
    <property type="chains" value="B=29-280"/>
</dbReference>
<dbReference type="PDB" id="3AEG">
    <property type="method" value="X-ray"/>
    <property type="resolution" value="3.27 A"/>
    <property type="chains" value="B=29-280"/>
</dbReference>
<dbReference type="PDB" id="3SFD">
    <property type="method" value="X-ray"/>
    <property type="resolution" value="2.61 A"/>
    <property type="chains" value="B=29-280"/>
</dbReference>
<dbReference type="PDB" id="3SFE">
    <property type="method" value="X-ray"/>
    <property type="resolution" value="2.81 A"/>
    <property type="chains" value="B=29-280"/>
</dbReference>
<dbReference type="PDB" id="4YTP">
    <property type="method" value="X-ray"/>
    <property type="resolution" value="3.10 A"/>
    <property type="chains" value="B=1-280"/>
</dbReference>
<dbReference type="PDB" id="4YXD">
    <property type="method" value="X-ray"/>
    <property type="resolution" value="3.00 A"/>
    <property type="chains" value="B=1-280"/>
</dbReference>
<dbReference type="PDBsum" id="1ZOY"/>
<dbReference type="PDBsum" id="1ZP0"/>
<dbReference type="PDBsum" id="3ABV"/>
<dbReference type="PDBsum" id="3AE1"/>
<dbReference type="PDBsum" id="3AE2"/>
<dbReference type="PDBsum" id="3AE3"/>
<dbReference type="PDBsum" id="3AE4"/>
<dbReference type="PDBsum" id="3AE5"/>
<dbReference type="PDBsum" id="3AE6"/>
<dbReference type="PDBsum" id="3AE7"/>
<dbReference type="PDBsum" id="3AE8"/>
<dbReference type="PDBsum" id="3AE9"/>
<dbReference type="PDBsum" id="3AEA"/>
<dbReference type="PDBsum" id="3AEB"/>
<dbReference type="PDBsum" id="3AEC"/>
<dbReference type="PDBsum" id="3AED"/>
<dbReference type="PDBsum" id="3AEE"/>
<dbReference type="PDBsum" id="3AEF"/>
<dbReference type="PDBsum" id="3AEG"/>
<dbReference type="PDBsum" id="3SFD"/>
<dbReference type="PDBsum" id="3SFE"/>
<dbReference type="PDBsum" id="4YTP"/>
<dbReference type="PDBsum" id="4YXD"/>
<dbReference type="SMR" id="Q007T0"/>
<dbReference type="FunCoup" id="Q007T0">
    <property type="interactions" value="2116"/>
</dbReference>
<dbReference type="STRING" id="9823.ENSSSCP00000071101"/>
<dbReference type="ChEMBL" id="CHEMBL2366485"/>
<dbReference type="PaxDb" id="9823-ENSSSCP00000022052"/>
<dbReference type="PeptideAtlas" id="Q007T0"/>
<dbReference type="GeneID" id="414412"/>
<dbReference type="KEGG" id="ssc:414412"/>
<dbReference type="CTD" id="6390"/>
<dbReference type="eggNOG" id="KOG3049">
    <property type="taxonomic scope" value="Eukaryota"/>
</dbReference>
<dbReference type="InParanoid" id="Q007T0"/>
<dbReference type="OrthoDB" id="1696654at2759"/>
<dbReference type="UniPathway" id="UPA00223">
    <property type="reaction ID" value="UER01006"/>
</dbReference>
<dbReference type="EvolutionaryTrace" id="Q007T0"/>
<dbReference type="Proteomes" id="UP000008227">
    <property type="component" value="Unplaced"/>
</dbReference>
<dbReference type="Proteomes" id="UP000314985">
    <property type="component" value="Unplaced"/>
</dbReference>
<dbReference type="Proteomes" id="UP000694570">
    <property type="component" value="Unplaced"/>
</dbReference>
<dbReference type="Proteomes" id="UP000694571">
    <property type="component" value="Unplaced"/>
</dbReference>
<dbReference type="Proteomes" id="UP000694720">
    <property type="component" value="Unplaced"/>
</dbReference>
<dbReference type="Proteomes" id="UP000694722">
    <property type="component" value="Unplaced"/>
</dbReference>
<dbReference type="Proteomes" id="UP000694723">
    <property type="component" value="Unplaced"/>
</dbReference>
<dbReference type="Proteomes" id="UP000694724">
    <property type="component" value="Unplaced"/>
</dbReference>
<dbReference type="Proteomes" id="UP000694725">
    <property type="component" value="Unplaced"/>
</dbReference>
<dbReference type="Proteomes" id="UP000694726">
    <property type="component" value="Unplaced"/>
</dbReference>
<dbReference type="Proteomes" id="UP000694727">
    <property type="component" value="Unplaced"/>
</dbReference>
<dbReference type="Proteomes" id="UP000694728">
    <property type="component" value="Unplaced"/>
</dbReference>
<dbReference type="GO" id="GO:0005743">
    <property type="term" value="C:mitochondrial inner membrane"/>
    <property type="evidence" value="ECO:0000314"/>
    <property type="project" value="UniProtKB"/>
</dbReference>
<dbReference type="GO" id="GO:0031966">
    <property type="term" value="C:mitochondrial membrane"/>
    <property type="evidence" value="ECO:0000318"/>
    <property type="project" value="GO_Central"/>
</dbReference>
<dbReference type="GO" id="GO:0045273">
    <property type="term" value="C:respiratory chain complex II (succinate dehydrogenase)"/>
    <property type="evidence" value="ECO:0000314"/>
    <property type="project" value="UniProtKB"/>
</dbReference>
<dbReference type="GO" id="GO:0051537">
    <property type="term" value="F:2 iron, 2 sulfur cluster binding"/>
    <property type="evidence" value="ECO:0000314"/>
    <property type="project" value="UniProtKB"/>
</dbReference>
<dbReference type="GO" id="GO:0051538">
    <property type="term" value="F:3 iron, 4 sulfur cluster binding"/>
    <property type="evidence" value="ECO:0000314"/>
    <property type="project" value="UniProtKB"/>
</dbReference>
<dbReference type="GO" id="GO:0051539">
    <property type="term" value="F:4 iron, 4 sulfur cluster binding"/>
    <property type="evidence" value="ECO:0000314"/>
    <property type="project" value="UniProtKB"/>
</dbReference>
<dbReference type="GO" id="GO:0009055">
    <property type="term" value="F:electron transfer activity"/>
    <property type="evidence" value="ECO:0007669"/>
    <property type="project" value="InterPro"/>
</dbReference>
<dbReference type="GO" id="GO:0046872">
    <property type="term" value="F:metal ion binding"/>
    <property type="evidence" value="ECO:0007669"/>
    <property type="project" value="UniProtKB-KW"/>
</dbReference>
<dbReference type="GO" id="GO:0008177">
    <property type="term" value="F:succinate dehydrogenase (quinone) activity"/>
    <property type="evidence" value="ECO:0000250"/>
    <property type="project" value="UniProtKB"/>
</dbReference>
<dbReference type="GO" id="GO:0048039">
    <property type="term" value="F:ubiquinone binding"/>
    <property type="evidence" value="ECO:0000314"/>
    <property type="project" value="UniProtKB"/>
</dbReference>
<dbReference type="GO" id="GO:0009060">
    <property type="term" value="P:aerobic respiration"/>
    <property type="evidence" value="ECO:0000318"/>
    <property type="project" value="GO_Central"/>
</dbReference>
<dbReference type="GO" id="GO:0006121">
    <property type="term" value="P:mitochondrial electron transport, succinate to ubiquinone"/>
    <property type="evidence" value="ECO:0000305"/>
    <property type="project" value="UniProtKB"/>
</dbReference>
<dbReference type="GO" id="GO:0022904">
    <property type="term" value="P:respiratory electron transport chain"/>
    <property type="evidence" value="ECO:0000318"/>
    <property type="project" value="GO_Central"/>
</dbReference>
<dbReference type="GO" id="GO:0006099">
    <property type="term" value="P:tricarboxylic acid cycle"/>
    <property type="evidence" value="ECO:0007669"/>
    <property type="project" value="UniProtKB-UniPathway"/>
</dbReference>
<dbReference type="CDD" id="cd00207">
    <property type="entry name" value="fer2"/>
    <property type="match status" value="1"/>
</dbReference>
<dbReference type="FunFam" id="1.10.1060.10:FF:000029">
    <property type="entry name" value="Succinate dehydrogenase [ubiquinone] iron-sulfur subunit, mitochondrial"/>
    <property type="match status" value="1"/>
</dbReference>
<dbReference type="FunFam" id="3.10.20.30:FF:000007">
    <property type="entry name" value="Succinate dehydrogenase [ubiquinone] iron-sulfur subunit, mitochondrial"/>
    <property type="match status" value="1"/>
</dbReference>
<dbReference type="Gene3D" id="3.10.20.30">
    <property type="match status" value="1"/>
</dbReference>
<dbReference type="Gene3D" id="1.10.1060.10">
    <property type="entry name" value="Alpha-helical ferredoxin"/>
    <property type="match status" value="1"/>
</dbReference>
<dbReference type="InterPro" id="IPR036010">
    <property type="entry name" value="2Fe-2S_ferredoxin-like_sf"/>
</dbReference>
<dbReference type="InterPro" id="IPR001041">
    <property type="entry name" value="2Fe-2S_ferredoxin-type"/>
</dbReference>
<dbReference type="InterPro" id="IPR006058">
    <property type="entry name" value="2Fe2S_fd_BS"/>
</dbReference>
<dbReference type="InterPro" id="IPR017896">
    <property type="entry name" value="4Fe4S_Fe-S-bd"/>
</dbReference>
<dbReference type="InterPro" id="IPR017900">
    <property type="entry name" value="4Fe4S_Fe_S_CS"/>
</dbReference>
<dbReference type="InterPro" id="IPR012675">
    <property type="entry name" value="Beta-grasp_dom_sf"/>
</dbReference>
<dbReference type="InterPro" id="IPR009051">
    <property type="entry name" value="Helical_ferredxn"/>
</dbReference>
<dbReference type="InterPro" id="IPR050573">
    <property type="entry name" value="SDH/FRD_Iron-Sulfur"/>
</dbReference>
<dbReference type="InterPro" id="IPR004489">
    <property type="entry name" value="Succ_DH/fum_Rdtase_Fe-S"/>
</dbReference>
<dbReference type="InterPro" id="IPR025192">
    <property type="entry name" value="Succ_DH/fum_Rdtase_N"/>
</dbReference>
<dbReference type="NCBIfam" id="TIGR00384">
    <property type="entry name" value="dhsB"/>
    <property type="match status" value="1"/>
</dbReference>
<dbReference type="NCBIfam" id="NF004616">
    <property type="entry name" value="PRK05950.1"/>
    <property type="match status" value="1"/>
</dbReference>
<dbReference type="PANTHER" id="PTHR11921:SF29">
    <property type="entry name" value="SUCCINATE DEHYDROGENASE [UBIQUINONE] IRON-SULFUR SUBUNIT, MITOCHONDRIAL"/>
    <property type="match status" value="1"/>
</dbReference>
<dbReference type="PANTHER" id="PTHR11921">
    <property type="entry name" value="SUCCINATE DEHYDROGENASE IRON-SULFUR PROTEIN"/>
    <property type="match status" value="1"/>
</dbReference>
<dbReference type="Pfam" id="PF13085">
    <property type="entry name" value="Fer2_3"/>
    <property type="match status" value="1"/>
</dbReference>
<dbReference type="Pfam" id="PF13534">
    <property type="entry name" value="Fer4_17"/>
    <property type="match status" value="1"/>
</dbReference>
<dbReference type="SUPFAM" id="SSF54292">
    <property type="entry name" value="2Fe-2S ferredoxin-like"/>
    <property type="match status" value="1"/>
</dbReference>
<dbReference type="SUPFAM" id="SSF46548">
    <property type="entry name" value="alpha-helical ferredoxin"/>
    <property type="match status" value="1"/>
</dbReference>
<dbReference type="PROSITE" id="PS00197">
    <property type="entry name" value="2FE2S_FER_1"/>
    <property type="match status" value="1"/>
</dbReference>
<dbReference type="PROSITE" id="PS51085">
    <property type="entry name" value="2FE2S_FER_2"/>
    <property type="match status" value="1"/>
</dbReference>
<dbReference type="PROSITE" id="PS00198">
    <property type="entry name" value="4FE4S_FER_1"/>
    <property type="match status" value="1"/>
</dbReference>
<dbReference type="PROSITE" id="PS51379">
    <property type="entry name" value="4FE4S_FER_2"/>
    <property type="match status" value="1"/>
</dbReference>
<accession>Q007T0</accession>
<accession>Q0QEX6</accession>
<gene>
    <name type="primary">SDHB</name>
</gene>
<comment type="function">
    <text evidence="2 7">Iron-sulfur protein (IP) subunit of the succinate dehydrogenase complex (mitochondrial respiratory chain complex II), responsible for transferring electrons from succinate to ubiquinone (coenzyme Q) (PubMed:15989954). SDH also oxidizes malate to the non-canonical enol form of oxaloacetate, enol-oxaloacetate. Enol-oxaloacetate, which is a potent inhibitor of the succinate dehydrogenase activity, is further isomerized into keto-oxaloacetate (By similarity).</text>
</comment>
<comment type="catalytic activity">
    <reaction evidence="1">
        <text>a quinone + succinate = fumarate + a quinol</text>
        <dbReference type="Rhea" id="RHEA:40523"/>
        <dbReference type="ChEBI" id="CHEBI:24646"/>
        <dbReference type="ChEBI" id="CHEBI:29806"/>
        <dbReference type="ChEBI" id="CHEBI:30031"/>
        <dbReference type="ChEBI" id="CHEBI:132124"/>
        <dbReference type="EC" id="1.3.5.1"/>
    </reaction>
</comment>
<comment type="catalytic activity">
    <reaction evidence="2">
        <text>(R)-malate + a quinone = enol-oxaloacetate + a quinol</text>
        <dbReference type="Rhea" id="RHEA:79827"/>
        <dbReference type="ChEBI" id="CHEBI:15588"/>
        <dbReference type="ChEBI" id="CHEBI:17479"/>
        <dbReference type="ChEBI" id="CHEBI:24646"/>
        <dbReference type="ChEBI" id="CHEBI:132124"/>
    </reaction>
    <physiologicalReaction direction="left-to-right" evidence="2">
        <dbReference type="Rhea" id="RHEA:79828"/>
    </physiologicalReaction>
</comment>
<comment type="catalytic activity">
    <reaction evidence="2">
        <text>(S)-malate + a quinone = enol-oxaloacetate + a quinol</text>
        <dbReference type="Rhea" id="RHEA:79831"/>
        <dbReference type="ChEBI" id="CHEBI:15589"/>
        <dbReference type="ChEBI" id="CHEBI:17479"/>
        <dbReference type="ChEBI" id="CHEBI:24646"/>
        <dbReference type="ChEBI" id="CHEBI:132124"/>
    </reaction>
    <physiologicalReaction direction="left-to-right" evidence="2">
        <dbReference type="Rhea" id="RHEA:79832"/>
    </physiologicalReaction>
</comment>
<comment type="cofactor">
    <cofactor>
        <name>[2Fe-2S] cluster</name>
        <dbReference type="ChEBI" id="CHEBI:190135"/>
    </cofactor>
    <text evidence="7">Binds 1 [2Fe-2S] cluster.</text>
</comment>
<comment type="cofactor">
    <cofactor>
        <name>[3Fe-4S] cluster</name>
        <dbReference type="ChEBI" id="CHEBI:21137"/>
    </cofactor>
    <text evidence="7">Binds 1 [3Fe-4S] cluster.</text>
</comment>
<comment type="cofactor">
    <cofactor>
        <name>[4Fe-4S] cluster</name>
        <dbReference type="ChEBI" id="CHEBI:49883"/>
    </cofactor>
    <text evidence="7">Binds 1 [4Fe-4S] cluster.</text>
</comment>
<comment type="activity regulation">
    <text evidence="2">Enol-oxaloacetate inhibits the succinate dehydrogenase activity.</text>
</comment>
<comment type="pathway">
    <text evidence="7">Carbohydrate metabolism; tricarboxylic acid cycle; fumarate from succinate (eukaryal route): step 1/1.</text>
</comment>
<comment type="subunit">
    <text evidence="1 7">Component of complex II composed of four subunits: the flavoprotein (FP) SDHA, iron-sulfur protein (IP) SDHB, and a cytochrome b560 composed of SDHC and SDHD (PubMed:15989954). Interacts with SDHAF1; the interaction is required for iron-sulfur cluster incorporation into SDHB (By similarity).</text>
</comment>
<comment type="subcellular location">
    <subcellularLocation>
        <location evidence="4">Mitochondrion inner membrane</location>
        <topology evidence="4">Peripheral membrane protein</topology>
        <orientation evidence="4">Matrix side</orientation>
    </subcellularLocation>
</comment>
<comment type="similarity">
    <text evidence="8">Belongs to the succinate dehydrogenase/fumarate reductase iron-sulfur protein family.</text>
</comment>
<feature type="transit peptide" description="Mitochondrion">
    <location>
        <begin position="1"/>
        <end position="28"/>
    </location>
</feature>
<feature type="chain" id="PRO_0000343799" description="Succinate dehydrogenase [ubiquinone] iron-sulfur subunit, mitochondrial">
    <location>
        <begin position="29"/>
        <end position="280"/>
    </location>
</feature>
<feature type="domain" description="2Fe-2S ferredoxin-type" evidence="5">
    <location>
        <begin position="40"/>
        <end position="131"/>
    </location>
</feature>
<feature type="domain" description="4Fe-4S ferredoxin-type" evidence="6">
    <location>
        <begin position="176"/>
        <end position="206"/>
    </location>
</feature>
<feature type="region of interest" description="Interaction with SDHAF1" evidence="1">
    <location>
        <begin position="146"/>
        <end position="218"/>
    </location>
</feature>
<feature type="binding site" evidence="7 9">
    <location>
        <position position="93"/>
    </location>
    <ligand>
        <name>[2Fe-2S] cluster</name>
        <dbReference type="ChEBI" id="CHEBI:190135"/>
    </ligand>
</feature>
<feature type="binding site" evidence="7 9">
    <location>
        <position position="98"/>
    </location>
    <ligand>
        <name>[2Fe-2S] cluster</name>
        <dbReference type="ChEBI" id="CHEBI:190135"/>
    </ligand>
</feature>
<feature type="binding site" evidence="7 9">
    <location>
        <position position="101"/>
    </location>
    <ligand>
        <name>[2Fe-2S] cluster</name>
        <dbReference type="ChEBI" id="CHEBI:190135"/>
    </ligand>
</feature>
<feature type="binding site" evidence="7 9">
    <location>
        <position position="113"/>
    </location>
    <ligand>
        <name>[2Fe-2S] cluster</name>
        <dbReference type="ChEBI" id="CHEBI:190135"/>
    </ligand>
</feature>
<feature type="binding site" evidence="7 9">
    <location>
        <position position="186"/>
    </location>
    <ligand>
        <name>[4Fe-4S] cluster</name>
        <dbReference type="ChEBI" id="CHEBI:49883"/>
    </ligand>
</feature>
<feature type="binding site" evidence="7 9">
    <location>
        <position position="189"/>
    </location>
    <ligand>
        <name>[4Fe-4S] cluster</name>
        <dbReference type="ChEBI" id="CHEBI:49883"/>
    </ligand>
</feature>
<feature type="binding site" evidence="7 9">
    <location>
        <position position="192"/>
    </location>
    <ligand>
        <name>[4Fe-4S] cluster</name>
        <dbReference type="ChEBI" id="CHEBI:49883"/>
    </ligand>
</feature>
<feature type="binding site" evidence="7 9">
    <location>
        <position position="196"/>
    </location>
    <ligand>
        <name>[3Fe-4S] cluster</name>
        <dbReference type="ChEBI" id="CHEBI:21137"/>
    </ligand>
</feature>
<feature type="binding site" evidence="7">
    <location>
        <position position="201"/>
    </location>
    <ligand>
        <name>a ubiquinone</name>
        <dbReference type="ChEBI" id="CHEBI:16389"/>
        <note>ligand shared with DHSD</note>
    </ligand>
</feature>
<feature type="binding site" evidence="7 9">
    <location>
        <position position="243"/>
    </location>
    <ligand>
        <name>[3Fe-4S] cluster</name>
        <dbReference type="ChEBI" id="CHEBI:21137"/>
    </ligand>
</feature>
<feature type="binding site" evidence="7 9">
    <location>
        <position position="249"/>
    </location>
    <ligand>
        <name>[3Fe-4S] cluster</name>
        <dbReference type="ChEBI" id="CHEBI:21137"/>
    </ligand>
</feature>
<feature type="binding site" evidence="7 9">
    <location>
        <position position="253"/>
    </location>
    <ligand>
        <name>[4Fe-4S] cluster</name>
        <dbReference type="ChEBI" id="CHEBI:49883"/>
    </ligand>
</feature>
<feature type="modified residue" description="N6-acetyllysine" evidence="3">
    <location>
        <position position="51"/>
    </location>
</feature>
<feature type="modified residue" description="N6-acetyllysine" evidence="3">
    <location>
        <position position="55"/>
    </location>
</feature>
<feature type="strand" evidence="10">
    <location>
        <begin position="39"/>
        <end position="46"/>
    </location>
</feature>
<feature type="strand" evidence="12">
    <location>
        <begin position="51"/>
        <end position="53"/>
    </location>
</feature>
<feature type="strand" evidence="10">
    <location>
        <begin position="57"/>
        <end position="64"/>
    </location>
</feature>
<feature type="helix" evidence="10">
    <location>
        <begin position="65"/>
        <end position="67"/>
    </location>
</feature>
<feature type="helix" evidence="10">
    <location>
        <begin position="72"/>
        <end position="81"/>
    </location>
</feature>
<feature type="strand" evidence="10">
    <location>
        <begin position="94"/>
        <end position="98"/>
    </location>
</feature>
<feature type="strand" evidence="10">
    <location>
        <begin position="103"/>
        <end position="105"/>
    </location>
</feature>
<feature type="strand" evidence="10">
    <location>
        <begin position="108"/>
        <end position="110"/>
    </location>
</feature>
<feature type="turn" evidence="10">
    <location>
        <begin position="112"/>
        <end position="114"/>
    </location>
</feature>
<feature type="strand" evidence="10">
    <location>
        <begin position="123"/>
        <end position="128"/>
    </location>
</feature>
<feature type="strand" evidence="11">
    <location>
        <begin position="130"/>
        <end position="132"/>
    </location>
</feature>
<feature type="strand" evidence="10">
    <location>
        <begin position="133"/>
        <end position="137"/>
    </location>
</feature>
<feature type="helix" evidence="10">
    <location>
        <begin position="144"/>
        <end position="152"/>
    </location>
</feature>
<feature type="turn" evidence="10">
    <location>
        <begin position="163"/>
        <end position="167"/>
    </location>
</feature>
<feature type="helix" evidence="10">
    <location>
        <begin position="174"/>
        <end position="178"/>
    </location>
</feature>
<feature type="turn" evidence="10">
    <location>
        <begin position="179"/>
        <end position="185"/>
    </location>
</feature>
<feature type="helix" evidence="10">
    <location>
        <begin position="193"/>
        <end position="195"/>
    </location>
</feature>
<feature type="helix" evidence="10">
    <location>
        <begin position="197"/>
        <end position="202"/>
    </location>
</feature>
<feature type="turn" evidence="10">
    <location>
        <begin position="203"/>
        <end position="205"/>
    </location>
</feature>
<feature type="helix" evidence="10">
    <location>
        <begin position="208"/>
        <end position="219"/>
    </location>
</feature>
<feature type="helix" evidence="10">
    <location>
        <begin position="227"/>
        <end position="232"/>
    </location>
</feature>
<feature type="strand" evidence="10">
    <location>
        <begin position="236"/>
        <end position="238"/>
    </location>
</feature>
<feature type="turn" evidence="10">
    <location>
        <begin position="239"/>
        <end position="242"/>
    </location>
</feature>
<feature type="helix" evidence="10">
    <location>
        <begin position="250"/>
        <end position="252"/>
    </location>
</feature>
<feature type="helix" evidence="10">
    <location>
        <begin position="259"/>
        <end position="270"/>
    </location>
</feature>
<organism>
    <name type="scientific">Sus scrofa</name>
    <name type="common">Pig</name>
    <dbReference type="NCBI Taxonomy" id="9823"/>
    <lineage>
        <taxon>Eukaryota</taxon>
        <taxon>Metazoa</taxon>
        <taxon>Chordata</taxon>
        <taxon>Craniata</taxon>
        <taxon>Vertebrata</taxon>
        <taxon>Euteleostomi</taxon>
        <taxon>Mammalia</taxon>
        <taxon>Eutheria</taxon>
        <taxon>Laurasiatheria</taxon>
        <taxon>Artiodactyla</taxon>
        <taxon>Suina</taxon>
        <taxon>Suidae</taxon>
        <taxon>Sus</taxon>
    </lineage>
</organism>